<sequence>MRLIGLALGLLLGALAQAGEAPGEALYRQHCQACHGAGRLGGSGPTLLPESLSRLKPAQAREVILHGRPATQMAGFAGQLDDAAADALVAYLYQAPPREPQWSAEDIRASQVQPHPLATLPSRPRFEADPLNLFVVVESGDHHVTILDGDRFEPIARFPSRYALHGGPKFSPDGRLVYFASRDGWVTLYDLYNLKVVAEVRAGLNTRNLAVSDDGRWVLVGNYLPGNLVLLDARDLSLVQVIPAADAQGQASRVSAVYTAPPRHSFVVALKDVHELWELPYANGKPVAPKRLAVADYLDDFSFSPDYRYLLGSSRQARGGEVIELDSGARVASIPLSGMPHLGSGIYWKRDGRWVFATPNISRGVISVIDLQNWKPLKEIVTDGPGFFMRSHADSPYAWTDTFLGKKHDEILLIDKQTLEIAHRLRPSPGKVAGHVEFTRDGRYALLSVWDRDGALVVYDAHSLEEVKRLPMNKPSGKYNVGNKIGYAEGTSH</sequence>
<evidence type="ECO:0000255" key="1"/>
<evidence type="ECO:0000255" key="2">
    <source>
        <dbReference type="PROSITE-ProRule" id="PRU00433"/>
    </source>
</evidence>
<evidence type="ECO:0000269" key="3">
    <source>
    </source>
</evidence>
<evidence type="ECO:0000269" key="4">
    <source>
    </source>
</evidence>
<evidence type="ECO:0000269" key="5">
    <source>
    </source>
</evidence>
<evidence type="ECO:0000303" key="6">
    <source>
    </source>
</evidence>
<evidence type="ECO:0000303" key="7">
    <source>
    </source>
</evidence>
<evidence type="ECO:0000305" key="8"/>
<evidence type="ECO:0000305" key="9">
    <source>
    </source>
</evidence>
<evidence type="ECO:0000305" key="10">
    <source>
    </source>
</evidence>
<evidence type="ECO:0000305" key="11">
    <source>
    </source>
</evidence>
<evidence type="ECO:0000312" key="12">
    <source>
        <dbReference type="EMBL" id="AAG03898.1"/>
    </source>
</evidence>
<evidence type="ECO:0007744" key="13">
    <source>
        <dbReference type="PDB" id="6RTD"/>
    </source>
</evidence>
<evidence type="ECO:0007744" key="14">
    <source>
        <dbReference type="PDB" id="6RTE"/>
    </source>
</evidence>
<evidence type="ECO:0007829" key="15">
    <source>
        <dbReference type="PDB" id="6RTE"/>
    </source>
</evidence>
<reference key="1">
    <citation type="journal article" date="1997" name="J. Bacteriol.">
        <title>Gene cluster for dissimilatory nitrite reductase (nir) from Pseudomonas aeruginosa: sequencing and identification of a locus for heme d1 biosynthesis.</title>
        <authorList>
            <person name="Kawasaki S."/>
            <person name="Arai H."/>
            <person name="Kodama T."/>
            <person name="Igarashi Y."/>
        </authorList>
    </citation>
    <scope>NUCLEOTIDE SEQUENCE [GENOMIC DNA]</scope>
    <scope>FUNCTION</scope>
    <scope>PATHWAY</scope>
    <scope>DISRUPTION PHENOTYPE</scope>
    <source>
        <strain>ATCC 15692 / DSM 22644 / CIP 104116 / JCM 14847 / LMG 12228 / 1C / PRS 101 / PAO1</strain>
    </source>
</reference>
<reference key="2">
    <citation type="journal article" date="2000" name="Nature">
        <title>Complete genome sequence of Pseudomonas aeruginosa PAO1, an opportunistic pathogen.</title>
        <authorList>
            <person name="Stover C.K."/>
            <person name="Pham X.-Q.T."/>
            <person name="Erwin A.L."/>
            <person name="Mizoguchi S.D."/>
            <person name="Warrener P."/>
            <person name="Hickey M.J."/>
            <person name="Brinkman F.S.L."/>
            <person name="Hufnagle W.O."/>
            <person name="Kowalik D.J."/>
            <person name="Lagrou M."/>
            <person name="Garber R.L."/>
            <person name="Goltry L."/>
            <person name="Tolentino E."/>
            <person name="Westbrock-Wadman S."/>
            <person name="Yuan Y."/>
            <person name="Brody L.L."/>
            <person name="Coulter S.N."/>
            <person name="Folger K.R."/>
            <person name="Kas A."/>
            <person name="Larbig K."/>
            <person name="Lim R.M."/>
            <person name="Smith K.A."/>
            <person name="Spencer D.H."/>
            <person name="Wong G.K.-S."/>
            <person name="Wu Z."/>
            <person name="Paulsen I.T."/>
            <person name="Reizer J."/>
            <person name="Saier M.H. Jr."/>
            <person name="Hancock R.E.W."/>
            <person name="Lory S."/>
            <person name="Olson M.V."/>
        </authorList>
    </citation>
    <scope>NUCLEOTIDE SEQUENCE [LARGE SCALE GENOMIC DNA]</scope>
    <source>
        <strain>ATCC 15692 / DSM 22644 / CIP 104116 / JCM 14847 / LMG 12228 / 1C / PRS 101 / PAO1</strain>
    </source>
</reference>
<reference key="3">
    <citation type="journal article" date="2014" name="J. Biol. Chem.">
        <title>NirN protein from Pseudomonas aeruginosa is a novel electron-bifurcating dehydrogenase catalyzing the last step of heme d1 biosynthesis.</title>
        <authorList>
            <person name="Adamczack J."/>
            <person name="Hoffmann M."/>
            <person name="Papke U."/>
            <person name="Haufschildt K."/>
            <person name="Nicke T."/>
            <person name="Broering M."/>
            <person name="Sezer M."/>
            <person name="Weimar R."/>
            <person name="Kuhlmann U."/>
            <person name="Hildebrandt P."/>
            <person name="Layer G."/>
        </authorList>
    </citation>
    <scope>FUNCTION</scope>
    <scope>CATALYTIC ACTIVITY</scope>
    <scope>COFACTOR</scope>
    <scope>PATHWAY</scope>
    <scope>DISRUPTION PHENOTYPE</scope>
    <source>
        <strain>ATCC 15692 / DSM 22644 / CIP 104116 / JCM 14847 / LMG 12228 / 1C / PRS 101 / PAO1</strain>
    </source>
</reference>
<reference evidence="13 14" key="4">
    <citation type="journal article" date="2019" name="J. Mol. Biol.">
        <title>Crystal structure of dihydro-heme d1 dehydrogenase NirN from Pseudomonas aeruginosa reveals amino acid residues essential for catalysis.</title>
        <authorList>
            <person name="Klunemann T."/>
            <person name="Preuss A."/>
            <person name="Adamczack J."/>
            <person name="Rosa L.F.M."/>
            <person name="Harnisch F."/>
            <person name="Layer G."/>
            <person name="Blankenfeldt W."/>
        </authorList>
    </citation>
    <scope>X-RAY CRYSTALLOGRAPHY (1.94 ANGSTROMS) OF 21-493 IN COMPLEXES WITH HEME C AND HEME D1</scope>
    <scope>COFACTOR</scope>
    <scope>SUBUNIT</scope>
    <scope>DOMAIN</scope>
    <scope>MUTAGENESIS OF HIS-165; HIS-341; HIS-435 AND TYR-479</scope>
    <source>
        <strain>ATCC 15692 / DSM 22644 / CIP 104116 / JCM 14847 / LMG 12228 / 1C / PRS 101 / PAO1</strain>
    </source>
</reference>
<gene>
    <name evidence="7" type="primary">nirN</name>
    <name evidence="12" type="ordered locus">PA0509</name>
</gene>
<organism>
    <name type="scientific">Pseudomonas aeruginosa (strain ATCC 15692 / DSM 22644 / CIP 104116 / JCM 14847 / LMG 12228 / 1C / PRS 101 / PAO1)</name>
    <dbReference type="NCBI Taxonomy" id="208964"/>
    <lineage>
        <taxon>Bacteria</taxon>
        <taxon>Pseudomonadati</taxon>
        <taxon>Pseudomonadota</taxon>
        <taxon>Gammaproteobacteria</taxon>
        <taxon>Pseudomonadales</taxon>
        <taxon>Pseudomonadaceae</taxon>
        <taxon>Pseudomonas</taxon>
    </lineage>
</organism>
<comment type="function">
    <text evidence="3 5">Involved in heme d1 biosynthesis (PubMed:25204657, PubMed:8982003). Catalyzes the introduction of a double bond into the propionate side chain of pyrrole ring D of dihydro-heme d1, therefore converting dihydro-heme d1 to heme d1 (PubMed:25204657).</text>
</comment>
<comment type="catalytic activity">
    <reaction evidence="3">
        <text>dihydro-heme d1 + A = heme d1 + AH2</text>
        <dbReference type="Rhea" id="RHEA:56524"/>
        <dbReference type="ChEBI" id="CHEBI:13193"/>
        <dbReference type="ChEBI" id="CHEBI:17499"/>
        <dbReference type="ChEBI" id="CHEBI:60549"/>
        <dbReference type="ChEBI" id="CHEBI:140498"/>
    </reaction>
    <physiologicalReaction direction="left-to-right" evidence="3">
        <dbReference type="Rhea" id="RHEA:56525"/>
    </physiologicalReaction>
</comment>
<comment type="cofactor">
    <cofactor evidence="3 4">
        <name>heme c</name>
        <dbReference type="ChEBI" id="CHEBI:61717"/>
    </cofactor>
</comment>
<comment type="pathway">
    <text evidence="3 11">Porphyrin-containing compound metabolism.</text>
</comment>
<comment type="subunit">
    <text evidence="4">Monomer.</text>
</comment>
<comment type="subcellular location">
    <subcellularLocation>
        <location evidence="9">Periplasm</location>
    </subcellularLocation>
</comment>
<comment type="domain">
    <text evidence="4">Consists of an N-terminal domain that binds the heme c cofactor, followed by a long linker segment, and a C-terminal region that exhibits an eight-bladed heme d1-binding beta-propeller domain.</text>
</comment>
<comment type="disruption phenotype">
    <text evidence="3 5">The mutant exhibits decreased dissimilatory nitrite reductase (NIR) activity (PubMed:8982003). In the absence of this gene, the formation of the acrylic double bond of heme d1 does not take place and dihydro-heme d1 is inserted into the nitrite reductase NirS (PubMed:25204657).</text>
</comment>
<comment type="similarity">
    <text evidence="8">Belongs to the cytochrome c family.</text>
</comment>
<feature type="signal peptide" evidence="1">
    <location>
        <begin position="1"/>
        <end position="18"/>
    </location>
</feature>
<feature type="chain" id="PRO_5004327132" description="Dihydro-heme d1 dehydrogenase">
    <location>
        <begin position="19"/>
        <end position="493"/>
    </location>
</feature>
<feature type="domain" description="Cytochrome c" evidence="2">
    <location>
        <begin position="19"/>
        <end position="96"/>
    </location>
</feature>
<feature type="region of interest" description="D1-heme domain" evidence="10">
    <location>
        <begin position="114"/>
        <end position="468"/>
    </location>
</feature>
<feature type="binding site" description="covalent" evidence="2 4 13 14">
    <location>
        <position position="31"/>
    </location>
    <ligand>
        <name>heme c</name>
        <dbReference type="ChEBI" id="CHEBI:61717"/>
    </ligand>
</feature>
<feature type="binding site" description="covalent" evidence="2 4 13 14">
    <location>
        <position position="34"/>
    </location>
    <ligand>
        <name>heme c</name>
        <dbReference type="ChEBI" id="CHEBI:61717"/>
    </ligand>
</feature>
<feature type="binding site" description="axial binding residue" evidence="2 4 13 14">
    <location>
        <position position="35"/>
    </location>
    <ligand>
        <name>heme c</name>
        <dbReference type="ChEBI" id="CHEBI:61717"/>
    </ligand>
    <ligandPart>
        <name>Fe</name>
        <dbReference type="ChEBI" id="CHEBI:18248"/>
    </ligandPart>
</feature>
<feature type="binding site" evidence="4 13 14">
    <location>
        <position position="68"/>
    </location>
    <ligand>
        <name>heme c</name>
        <dbReference type="ChEBI" id="CHEBI:61717"/>
    </ligand>
</feature>
<feature type="binding site" description="axial binding residue" evidence="4 13 14">
    <location>
        <position position="73"/>
    </location>
    <ligand>
        <name>heme c</name>
        <dbReference type="ChEBI" id="CHEBI:61717"/>
    </ligand>
    <ligandPart>
        <name>Fe</name>
        <dbReference type="ChEBI" id="CHEBI:18248"/>
    </ligandPart>
</feature>
<feature type="binding site" description="proximal binding residue" evidence="4 13">
    <location>
        <position position="165"/>
    </location>
    <ligand>
        <name>heme d1</name>
        <dbReference type="ChEBI" id="CHEBI:60549"/>
    </ligand>
    <ligandPart>
        <name>Fe</name>
        <dbReference type="ChEBI" id="CHEBI:18248"/>
    </ligandPart>
</feature>
<feature type="binding site" evidence="4 13">
    <location>
        <position position="167"/>
    </location>
    <ligand>
        <name>heme d1</name>
        <dbReference type="ChEBI" id="CHEBI:60549"/>
    </ligand>
</feature>
<feature type="binding site" evidence="4 13">
    <location>
        <position position="169"/>
    </location>
    <ligand>
        <name>heme d1</name>
        <dbReference type="ChEBI" id="CHEBI:60549"/>
    </ligand>
</feature>
<feature type="binding site" evidence="4 14">
    <location>
        <position position="182"/>
    </location>
    <ligand>
        <name>heme c</name>
        <dbReference type="ChEBI" id="CHEBI:61717"/>
    </ligand>
</feature>
<feature type="binding site" evidence="4 13">
    <location>
        <position position="182"/>
    </location>
    <ligand>
        <name>heme d1</name>
        <dbReference type="ChEBI" id="CHEBI:60549"/>
    </ligand>
</feature>
<feature type="binding site" evidence="4 13">
    <location>
        <position position="207"/>
    </location>
    <ligand>
        <name>heme d1</name>
        <dbReference type="ChEBI" id="CHEBI:60549"/>
    </ligand>
</feature>
<feature type="binding site" evidence="4 13">
    <location>
        <position position="208"/>
    </location>
    <ligand>
        <name>heme d1</name>
        <dbReference type="ChEBI" id="CHEBI:60549"/>
    </ligand>
</feature>
<feature type="binding site" description="distal binding residue" evidence="4 13">
    <location>
        <position position="341"/>
    </location>
    <ligand>
        <name>heme d1</name>
        <dbReference type="ChEBI" id="CHEBI:60549"/>
    </ligand>
    <ligandPart>
        <name>Fe</name>
        <dbReference type="ChEBI" id="CHEBI:18248"/>
    </ligandPart>
</feature>
<feature type="binding site" evidence="4 13">
    <location>
        <position position="390"/>
    </location>
    <ligand>
        <name>heme d1</name>
        <dbReference type="ChEBI" id="CHEBI:60549"/>
    </ligand>
</feature>
<feature type="binding site" evidence="4 13">
    <location>
        <position position="435"/>
    </location>
    <ligand>
        <name>heme d1</name>
        <dbReference type="ChEBI" id="CHEBI:60549"/>
    </ligand>
</feature>
<feature type="mutagenesis site" description="Abolishes heme d1 binding. Loss of activity." evidence="4">
    <original>H</original>
    <variation>A</variation>
    <variation>Q</variation>
    <location>
        <position position="165"/>
    </location>
</feature>
<feature type="mutagenesis site" description="Still able to bind heme d1 but lacks catalytic activity." evidence="4">
    <original>H</original>
    <variation>A</variation>
    <variation>Q</variation>
    <location>
        <position position="341"/>
    </location>
</feature>
<feature type="mutagenesis site" description="Decreases both heme d1 binding and turnover." evidence="4">
    <original>H</original>
    <variation>A</variation>
    <location>
        <position position="435"/>
    </location>
</feature>
<feature type="mutagenesis site" description="Does not affect heme d1 binding but decreases catalytic activity." evidence="4">
    <original>H</original>
    <variation>Q</variation>
    <location>
        <position position="435"/>
    </location>
</feature>
<feature type="mutagenesis site" description="Still able to bind heme d1 but lacks catalytic activity." evidence="4">
    <original>Y</original>
    <variation>F</variation>
    <location>
        <position position="479"/>
    </location>
</feature>
<feature type="sequence conflict" description="In Ref. 1; BAA12683." evidence="8" ref="1">
    <original>D</original>
    <variation>H</variation>
    <location>
        <position position="214"/>
    </location>
</feature>
<feature type="helix" evidence="15">
    <location>
        <begin position="22"/>
        <end position="30"/>
    </location>
</feature>
<feature type="helix" evidence="15">
    <location>
        <begin position="32"/>
        <end position="35"/>
    </location>
</feature>
<feature type="helix" evidence="15">
    <location>
        <begin position="37"/>
        <end position="39"/>
    </location>
</feature>
<feature type="strand" evidence="15">
    <location>
        <begin position="42"/>
        <end position="44"/>
    </location>
</feature>
<feature type="helix" evidence="15">
    <location>
        <begin position="50"/>
        <end position="52"/>
    </location>
</feature>
<feature type="helix" evidence="15">
    <location>
        <begin position="57"/>
        <end position="66"/>
    </location>
</feature>
<feature type="turn" evidence="15">
    <location>
        <begin position="77"/>
        <end position="79"/>
    </location>
</feature>
<feature type="helix" evidence="15">
    <location>
        <begin position="82"/>
        <end position="93"/>
    </location>
</feature>
<feature type="helix" evidence="15">
    <location>
        <begin position="104"/>
        <end position="110"/>
    </location>
</feature>
<feature type="helix" evidence="15">
    <location>
        <begin position="117"/>
        <end position="119"/>
    </location>
</feature>
<feature type="strand" evidence="15">
    <location>
        <begin position="125"/>
        <end position="128"/>
    </location>
</feature>
<feature type="helix" evidence="15">
    <location>
        <begin position="130"/>
        <end position="132"/>
    </location>
</feature>
<feature type="strand" evidence="15">
    <location>
        <begin position="134"/>
        <end position="138"/>
    </location>
</feature>
<feature type="turn" evidence="15">
    <location>
        <begin position="139"/>
        <end position="142"/>
    </location>
</feature>
<feature type="strand" evidence="15">
    <location>
        <begin position="143"/>
        <end position="148"/>
    </location>
</feature>
<feature type="turn" evidence="15">
    <location>
        <begin position="149"/>
        <end position="152"/>
    </location>
</feature>
<feature type="strand" evidence="15">
    <location>
        <begin position="153"/>
        <end position="159"/>
    </location>
</feature>
<feature type="strand" evidence="15">
    <location>
        <begin position="161"/>
        <end position="170"/>
    </location>
</feature>
<feature type="strand" evidence="15">
    <location>
        <begin position="174"/>
        <end position="181"/>
    </location>
</feature>
<feature type="strand" evidence="15">
    <location>
        <begin position="184"/>
        <end position="190"/>
    </location>
</feature>
<feature type="turn" evidence="15">
    <location>
        <begin position="191"/>
        <end position="194"/>
    </location>
</feature>
<feature type="strand" evidence="15">
    <location>
        <begin position="195"/>
        <end position="201"/>
    </location>
</feature>
<feature type="strand" evidence="15">
    <location>
        <begin position="204"/>
        <end position="211"/>
    </location>
</feature>
<feature type="strand" evidence="15">
    <location>
        <begin position="217"/>
        <end position="224"/>
    </location>
</feature>
<feature type="strand" evidence="15">
    <location>
        <begin position="227"/>
        <end position="232"/>
    </location>
</feature>
<feature type="turn" evidence="15">
    <location>
        <begin position="233"/>
        <end position="235"/>
    </location>
</feature>
<feature type="strand" evidence="15">
    <location>
        <begin position="238"/>
        <end position="243"/>
    </location>
</feature>
<feature type="strand" evidence="15">
    <location>
        <begin position="254"/>
        <end position="260"/>
    </location>
</feature>
<feature type="helix" evidence="15">
    <location>
        <begin position="261"/>
        <end position="263"/>
    </location>
</feature>
<feature type="strand" evidence="15">
    <location>
        <begin position="265"/>
        <end position="280"/>
    </location>
</feature>
<feature type="strand" evidence="15">
    <location>
        <begin position="290"/>
        <end position="293"/>
    </location>
</feature>
<feature type="strand" evidence="15">
    <location>
        <begin position="298"/>
        <end position="303"/>
    </location>
</feature>
<feature type="strand" evidence="15">
    <location>
        <begin position="307"/>
        <end position="314"/>
    </location>
</feature>
<feature type="strand" evidence="15">
    <location>
        <begin position="320"/>
        <end position="324"/>
    </location>
</feature>
<feature type="turn" evidence="15">
    <location>
        <begin position="325"/>
        <end position="327"/>
    </location>
</feature>
<feature type="strand" evidence="15">
    <location>
        <begin position="330"/>
        <end position="334"/>
    </location>
</feature>
<feature type="helix" evidence="15">
    <location>
        <begin position="342"/>
        <end position="344"/>
    </location>
</feature>
<feature type="strand" evidence="15">
    <location>
        <begin position="346"/>
        <end position="358"/>
    </location>
</feature>
<feature type="strand" evidence="15">
    <location>
        <begin position="360"/>
        <end position="370"/>
    </location>
</feature>
<feature type="turn" evidence="15">
    <location>
        <begin position="371"/>
        <end position="374"/>
    </location>
</feature>
<feature type="strand" evidence="15">
    <location>
        <begin position="375"/>
        <end position="381"/>
    </location>
</feature>
<feature type="strand" evidence="15">
    <location>
        <begin position="396"/>
        <end position="401"/>
    </location>
</feature>
<feature type="strand" evidence="15">
    <location>
        <begin position="405"/>
        <end position="407"/>
    </location>
</feature>
<feature type="strand" evidence="15">
    <location>
        <begin position="411"/>
        <end position="415"/>
    </location>
</feature>
<feature type="turn" evidence="15">
    <location>
        <begin position="416"/>
        <end position="418"/>
    </location>
</feature>
<feature type="strand" evidence="15">
    <location>
        <begin position="420"/>
        <end position="425"/>
    </location>
</feature>
<feature type="strand" evidence="15">
    <location>
        <begin position="433"/>
        <end position="438"/>
    </location>
</feature>
<feature type="strand" evidence="15">
    <location>
        <begin position="442"/>
        <end position="449"/>
    </location>
</feature>
<feature type="strand" evidence="15">
    <location>
        <begin position="454"/>
        <end position="460"/>
    </location>
</feature>
<feature type="turn" evidence="15">
    <location>
        <begin position="461"/>
        <end position="463"/>
    </location>
</feature>
<feature type="strand" evidence="15">
    <location>
        <begin position="466"/>
        <end position="480"/>
    </location>
</feature>
<feature type="helix" evidence="15">
    <location>
        <begin position="481"/>
        <end position="485"/>
    </location>
</feature>
<keyword id="KW-0002">3D-structure</keyword>
<keyword id="KW-0349">Heme</keyword>
<keyword id="KW-0408">Iron</keyword>
<keyword id="KW-0479">Metal-binding</keyword>
<keyword id="KW-0560">Oxidoreductase</keyword>
<keyword id="KW-0574">Periplasm</keyword>
<keyword id="KW-1185">Reference proteome</keyword>
<keyword id="KW-0732">Signal</keyword>
<name>NIRN_PSEAE</name>
<accession>Q9I609</accession>
<accession>P95418</accession>
<proteinExistence type="evidence at protein level"/>
<protein>
    <recommendedName>
        <fullName evidence="6">Dihydro-heme d1 dehydrogenase</fullName>
        <ecNumber evidence="3">1.3.-.-</ecNumber>
    </recommendedName>
</protein>
<dbReference type="EC" id="1.3.-.-" evidence="3"/>
<dbReference type="EMBL" id="D84475">
    <property type="protein sequence ID" value="BAA12683.1"/>
    <property type="molecule type" value="Genomic_DNA"/>
</dbReference>
<dbReference type="EMBL" id="AE004091">
    <property type="protein sequence ID" value="AAG03898.1"/>
    <property type="molecule type" value="Genomic_DNA"/>
</dbReference>
<dbReference type="PIR" id="A83581">
    <property type="entry name" value="A83581"/>
</dbReference>
<dbReference type="RefSeq" id="NP_249200.1">
    <property type="nucleotide sequence ID" value="NC_002516.2"/>
</dbReference>
<dbReference type="RefSeq" id="WP_003113244.1">
    <property type="nucleotide sequence ID" value="NZ_QZGE01000010.1"/>
</dbReference>
<dbReference type="PDB" id="6RTD">
    <property type="method" value="X-ray"/>
    <property type="resolution" value="2.36 A"/>
    <property type="chains" value="A/B=21-493"/>
</dbReference>
<dbReference type="PDB" id="6RTE">
    <property type="method" value="X-ray"/>
    <property type="resolution" value="1.94 A"/>
    <property type="chains" value="A/B=21-493"/>
</dbReference>
<dbReference type="PDBsum" id="6RTD"/>
<dbReference type="PDBsum" id="6RTE"/>
<dbReference type="SMR" id="Q9I609"/>
<dbReference type="STRING" id="208964.PA0509"/>
<dbReference type="PaxDb" id="208964-PA0509"/>
<dbReference type="GeneID" id="878428"/>
<dbReference type="KEGG" id="pae:PA0509"/>
<dbReference type="PATRIC" id="fig|208964.12.peg.539"/>
<dbReference type="PseudoCAP" id="PA0509"/>
<dbReference type="HOGENOM" id="CLU_025262_1_0_6"/>
<dbReference type="InParanoid" id="Q9I609"/>
<dbReference type="OrthoDB" id="5290932at2"/>
<dbReference type="PhylomeDB" id="Q9I609"/>
<dbReference type="BioCyc" id="PAER208964:G1FZ6-514-MONOMER"/>
<dbReference type="Proteomes" id="UP000002438">
    <property type="component" value="Chromosome"/>
</dbReference>
<dbReference type="GO" id="GO:0042597">
    <property type="term" value="C:periplasmic space"/>
    <property type="evidence" value="ECO:0007669"/>
    <property type="project" value="UniProtKB-SubCell"/>
</dbReference>
<dbReference type="GO" id="GO:0009055">
    <property type="term" value="F:electron transfer activity"/>
    <property type="evidence" value="ECO:0007669"/>
    <property type="project" value="InterPro"/>
</dbReference>
<dbReference type="GO" id="GO:0020037">
    <property type="term" value="F:heme binding"/>
    <property type="evidence" value="ECO:0007669"/>
    <property type="project" value="InterPro"/>
</dbReference>
<dbReference type="GO" id="GO:0046872">
    <property type="term" value="F:metal ion binding"/>
    <property type="evidence" value="ECO:0007669"/>
    <property type="project" value="UniProtKB-KW"/>
</dbReference>
<dbReference type="GO" id="GO:0016491">
    <property type="term" value="F:oxidoreductase activity"/>
    <property type="evidence" value="ECO:0007669"/>
    <property type="project" value="UniProtKB-KW"/>
</dbReference>
<dbReference type="GO" id="GO:0006783">
    <property type="term" value="P:heme biosynthetic process"/>
    <property type="evidence" value="ECO:0000314"/>
    <property type="project" value="PseudoCAP"/>
</dbReference>
<dbReference type="CDD" id="cd20777">
    <property type="entry name" value="8prop_heme-binding_NirN"/>
    <property type="match status" value="1"/>
</dbReference>
<dbReference type="FunFam" id="2.140.10.20:FF:000002">
    <property type="entry name" value="Probable c-type cytochrome"/>
    <property type="match status" value="1"/>
</dbReference>
<dbReference type="Gene3D" id="2.140.10.20">
    <property type="entry name" value="C-terminal (heme d1) domain of cytochrome cd1-nitrite reductase"/>
    <property type="match status" value="1"/>
</dbReference>
<dbReference type="Gene3D" id="1.10.760.10">
    <property type="entry name" value="Cytochrome c-like domain"/>
    <property type="match status" value="1"/>
</dbReference>
<dbReference type="InterPro" id="IPR009056">
    <property type="entry name" value="Cyt_c-like_dom"/>
</dbReference>
<dbReference type="InterPro" id="IPR036909">
    <property type="entry name" value="Cyt_c-like_dom_sf"/>
</dbReference>
<dbReference type="InterPro" id="IPR003143">
    <property type="entry name" value="Cyt_cd1_C_sf"/>
</dbReference>
<dbReference type="InterPro" id="IPR011048">
    <property type="entry name" value="Haem_d1_sf"/>
</dbReference>
<dbReference type="InterPro" id="IPR051200">
    <property type="entry name" value="Host-pathogen_enzymatic-act"/>
</dbReference>
<dbReference type="PANTHER" id="PTHR47197:SF3">
    <property type="entry name" value="DIHYDRO-HEME D1 DEHYDROGENASE"/>
    <property type="match status" value="1"/>
</dbReference>
<dbReference type="PANTHER" id="PTHR47197">
    <property type="entry name" value="PROTEIN NIRF"/>
    <property type="match status" value="1"/>
</dbReference>
<dbReference type="Pfam" id="PF02239">
    <property type="entry name" value="Cytochrom_D1"/>
    <property type="match status" value="1"/>
</dbReference>
<dbReference type="Pfam" id="PF13442">
    <property type="entry name" value="Cytochrome_CBB3"/>
    <property type="match status" value="1"/>
</dbReference>
<dbReference type="SUPFAM" id="SSF51004">
    <property type="entry name" value="C-terminal (heme d1) domain of cytochrome cd1-nitrite reductase"/>
    <property type="match status" value="1"/>
</dbReference>
<dbReference type="SUPFAM" id="SSF46626">
    <property type="entry name" value="Cytochrome c"/>
    <property type="match status" value="1"/>
</dbReference>
<dbReference type="PROSITE" id="PS51007">
    <property type="entry name" value="CYTC"/>
    <property type="match status" value="1"/>
</dbReference>